<reference key="1">
    <citation type="journal article" date="2009" name="Genome Biol.">
        <title>Genomic and genetic analyses of diversity and plant interactions of Pseudomonas fluorescens.</title>
        <authorList>
            <person name="Silby M.W."/>
            <person name="Cerdeno-Tarraga A.M."/>
            <person name="Vernikos G.S."/>
            <person name="Giddens S.R."/>
            <person name="Jackson R.W."/>
            <person name="Preston G.M."/>
            <person name="Zhang X.-X."/>
            <person name="Moon C.D."/>
            <person name="Gehrig S.M."/>
            <person name="Godfrey S.A.C."/>
            <person name="Knight C.G."/>
            <person name="Malone J.G."/>
            <person name="Robinson Z."/>
            <person name="Spiers A.J."/>
            <person name="Harris S."/>
            <person name="Challis G.L."/>
            <person name="Yaxley A.M."/>
            <person name="Harris D."/>
            <person name="Seeger K."/>
            <person name="Murphy L."/>
            <person name="Rutter S."/>
            <person name="Squares R."/>
            <person name="Quail M.A."/>
            <person name="Saunders E."/>
            <person name="Mavromatis K."/>
            <person name="Brettin T.S."/>
            <person name="Bentley S.D."/>
            <person name="Hothersall J."/>
            <person name="Stephens E."/>
            <person name="Thomas C.M."/>
            <person name="Parkhill J."/>
            <person name="Levy S.B."/>
            <person name="Rainey P.B."/>
            <person name="Thomson N.R."/>
        </authorList>
    </citation>
    <scope>NUCLEOTIDE SEQUENCE [LARGE SCALE GENOMIC DNA]</scope>
    <source>
        <strain>SBW25</strain>
    </source>
</reference>
<proteinExistence type="inferred from homology"/>
<protein>
    <recommendedName>
        <fullName evidence="1">UDP-N-acetylglucosamine 1-carboxyvinyltransferase</fullName>
        <ecNumber evidence="1">2.5.1.7</ecNumber>
    </recommendedName>
    <alternativeName>
        <fullName evidence="1">Enoylpyruvate transferase</fullName>
    </alternativeName>
    <alternativeName>
        <fullName evidence="1">UDP-N-acetylglucosamine enolpyruvyl transferase</fullName>
        <shortName evidence="1">EPT</shortName>
    </alternativeName>
</protein>
<organism>
    <name type="scientific">Pseudomonas fluorescens (strain SBW25)</name>
    <dbReference type="NCBI Taxonomy" id="216595"/>
    <lineage>
        <taxon>Bacteria</taxon>
        <taxon>Pseudomonadati</taxon>
        <taxon>Pseudomonadota</taxon>
        <taxon>Gammaproteobacteria</taxon>
        <taxon>Pseudomonadales</taxon>
        <taxon>Pseudomonadaceae</taxon>
        <taxon>Pseudomonas</taxon>
    </lineage>
</organism>
<dbReference type="EC" id="2.5.1.7" evidence="1"/>
<dbReference type="EMBL" id="AM181176">
    <property type="protein sequence ID" value="CAY47161.1"/>
    <property type="molecule type" value="Genomic_DNA"/>
</dbReference>
<dbReference type="RefSeq" id="WP_012722249.1">
    <property type="nucleotide sequence ID" value="NC_012660.1"/>
</dbReference>
<dbReference type="SMR" id="C3K8X4"/>
<dbReference type="STRING" id="294.SRM1_00916"/>
<dbReference type="GeneID" id="93462517"/>
<dbReference type="PATRIC" id="fig|216595.4.peg.1131"/>
<dbReference type="eggNOG" id="COG0766">
    <property type="taxonomic scope" value="Bacteria"/>
</dbReference>
<dbReference type="HOGENOM" id="CLU_027387_0_0_6"/>
<dbReference type="OrthoDB" id="9803760at2"/>
<dbReference type="UniPathway" id="UPA00219"/>
<dbReference type="GO" id="GO:0005737">
    <property type="term" value="C:cytoplasm"/>
    <property type="evidence" value="ECO:0007669"/>
    <property type="project" value="UniProtKB-SubCell"/>
</dbReference>
<dbReference type="GO" id="GO:0008760">
    <property type="term" value="F:UDP-N-acetylglucosamine 1-carboxyvinyltransferase activity"/>
    <property type="evidence" value="ECO:0007669"/>
    <property type="project" value="UniProtKB-UniRule"/>
</dbReference>
<dbReference type="GO" id="GO:0051301">
    <property type="term" value="P:cell division"/>
    <property type="evidence" value="ECO:0007669"/>
    <property type="project" value="UniProtKB-KW"/>
</dbReference>
<dbReference type="GO" id="GO:0071555">
    <property type="term" value="P:cell wall organization"/>
    <property type="evidence" value="ECO:0007669"/>
    <property type="project" value="UniProtKB-KW"/>
</dbReference>
<dbReference type="GO" id="GO:0009252">
    <property type="term" value="P:peptidoglycan biosynthetic process"/>
    <property type="evidence" value="ECO:0007669"/>
    <property type="project" value="UniProtKB-UniRule"/>
</dbReference>
<dbReference type="GO" id="GO:0008360">
    <property type="term" value="P:regulation of cell shape"/>
    <property type="evidence" value="ECO:0007669"/>
    <property type="project" value="UniProtKB-KW"/>
</dbReference>
<dbReference type="GO" id="GO:0019277">
    <property type="term" value="P:UDP-N-acetylgalactosamine biosynthetic process"/>
    <property type="evidence" value="ECO:0007669"/>
    <property type="project" value="InterPro"/>
</dbReference>
<dbReference type="CDD" id="cd01555">
    <property type="entry name" value="UdpNAET"/>
    <property type="match status" value="1"/>
</dbReference>
<dbReference type="FunFam" id="3.65.10.10:FF:000001">
    <property type="entry name" value="UDP-N-acetylglucosamine 1-carboxyvinyltransferase"/>
    <property type="match status" value="1"/>
</dbReference>
<dbReference type="FunFam" id="3.65.10.10:FF:000002">
    <property type="entry name" value="UDP-N-acetylglucosamine 1-carboxyvinyltransferase"/>
    <property type="match status" value="1"/>
</dbReference>
<dbReference type="Gene3D" id="3.65.10.10">
    <property type="entry name" value="Enolpyruvate transferase domain"/>
    <property type="match status" value="2"/>
</dbReference>
<dbReference type="HAMAP" id="MF_00111">
    <property type="entry name" value="MurA"/>
    <property type="match status" value="1"/>
</dbReference>
<dbReference type="InterPro" id="IPR001986">
    <property type="entry name" value="Enolpyruvate_Tfrase_dom"/>
</dbReference>
<dbReference type="InterPro" id="IPR036968">
    <property type="entry name" value="Enolpyruvate_Tfrase_sf"/>
</dbReference>
<dbReference type="InterPro" id="IPR050068">
    <property type="entry name" value="MurA_subfamily"/>
</dbReference>
<dbReference type="InterPro" id="IPR013792">
    <property type="entry name" value="RNA3'P_cycl/enolpyr_Trfase_a/b"/>
</dbReference>
<dbReference type="InterPro" id="IPR005750">
    <property type="entry name" value="UDP_GlcNAc_COvinyl_MurA"/>
</dbReference>
<dbReference type="NCBIfam" id="TIGR01072">
    <property type="entry name" value="murA"/>
    <property type="match status" value="1"/>
</dbReference>
<dbReference type="NCBIfam" id="NF006873">
    <property type="entry name" value="PRK09369.1"/>
    <property type="match status" value="1"/>
</dbReference>
<dbReference type="PANTHER" id="PTHR43783">
    <property type="entry name" value="UDP-N-ACETYLGLUCOSAMINE 1-CARBOXYVINYLTRANSFERASE"/>
    <property type="match status" value="1"/>
</dbReference>
<dbReference type="PANTHER" id="PTHR43783:SF1">
    <property type="entry name" value="UDP-N-ACETYLGLUCOSAMINE 1-CARBOXYVINYLTRANSFERASE"/>
    <property type="match status" value="1"/>
</dbReference>
<dbReference type="Pfam" id="PF00275">
    <property type="entry name" value="EPSP_synthase"/>
    <property type="match status" value="1"/>
</dbReference>
<dbReference type="SUPFAM" id="SSF55205">
    <property type="entry name" value="EPT/RTPC-like"/>
    <property type="match status" value="1"/>
</dbReference>
<accession>C3K8X4</accession>
<comment type="function">
    <text evidence="1">Cell wall formation. Adds enolpyruvyl to UDP-N-acetylglucosamine.</text>
</comment>
<comment type="catalytic activity">
    <reaction evidence="1">
        <text>phosphoenolpyruvate + UDP-N-acetyl-alpha-D-glucosamine = UDP-N-acetyl-3-O-(1-carboxyvinyl)-alpha-D-glucosamine + phosphate</text>
        <dbReference type="Rhea" id="RHEA:18681"/>
        <dbReference type="ChEBI" id="CHEBI:43474"/>
        <dbReference type="ChEBI" id="CHEBI:57705"/>
        <dbReference type="ChEBI" id="CHEBI:58702"/>
        <dbReference type="ChEBI" id="CHEBI:68483"/>
        <dbReference type="EC" id="2.5.1.7"/>
    </reaction>
</comment>
<comment type="pathway">
    <text evidence="1">Cell wall biogenesis; peptidoglycan biosynthesis.</text>
</comment>
<comment type="subcellular location">
    <subcellularLocation>
        <location evidence="1">Cytoplasm</location>
    </subcellularLocation>
</comment>
<comment type="similarity">
    <text evidence="1">Belongs to the EPSP synthase family. MurA subfamily.</text>
</comment>
<keyword id="KW-0131">Cell cycle</keyword>
<keyword id="KW-0132">Cell division</keyword>
<keyword id="KW-0133">Cell shape</keyword>
<keyword id="KW-0961">Cell wall biogenesis/degradation</keyword>
<keyword id="KW-0963">Cytoplasm</keyword>
<keyword id="KW-0573">Peptidoglycan synthesis</keyword>
<keyword id="KW-0670">Pyruvate</keyword>
<keyword id="KW-0808">Transferase</keyword>
<feature type="chain" id="PRO_1000202932" description="UDP-N-acetylglucosamine 1-carboxyvinyltransferase">
    <location>
        <begin position="1"/>
        <end position="421"/>
    </location>
</feature>
<feature type="active site" description="Proton donor" evidence="1">
    <location>
        <position position="117"/>
    </location>
</feature>
<feature type="binding site" evidence="1">
    <location>
        <begin position="22"/>
        <end position="23"/>
    </location>
    <ligand>
        <name>phosphoenolpyruvate</name>
        <dbReference type="ChEBI" id="CHEBI:58702"/>
    </ligand>
</feature>
<feature type="binding site" evidence="1">
    <location>
        <position position="93"/>
    </location>
    <ligand>
        <name>UDP-N-acetyl-alpha-D-glucosamine</name>
        <dbReference type="ChEBI" id="CHEBI:57705"/>
    </ligand>
</feature>
<feature type="binding site" evidence="1">
    <location>
        <begin position="122"/>
        <end position="126"/>
    </location>
    <ligand>
        <name>UDP-N-acetyl-alpha-D-glucosamine</name>
        <dbReference type="ChEBI" id="CHEBI:57705"/>
    </ligand>
</feature>
<feature type="binding site" evidence="1">
    <location>
        <position position="308"/>
    </location>
    <ligand>
        <name>UDP-N-acetyl-alpha-D-glucosamine</name>
        <dbReference type="ChEBI" id="CHEBI:57705"/>
    </ligand>
</feature>
<feature type="binding site" evidence="1">
    <location>
        <position position="330"/>
    </location>
    <ligand>
        <name>UDP-N-acetyl-alpha-D-glucosamine</name>
        <dbReference type="ChEBI" id="CHEBI:57705"/>
    </ligand>
</feature>
<feature type="modified residue" description="2-(S-cysteinyl)pyruvic acid O-phosphothioketal" evidence="1">
    <location>
        <position position="117"/>
    </location>
</feature>
<gene>
    <name evidence="1" type="primary">murA</name>
    <name type="ordered locus">PFLU_0894</name>
</gene>
<sequence length="421" mass="45003">MDKLIITGGARLDGEIRISGAKNSALPILAATLLCDGPVTVANLPHLHDITTMIELFGRMGIEPVIDEKLSVEIDPRTIKTLIAPYELVKTMRASILVLGPMVARFGEAEVALPGGCAIGSRPVDLHIRGLEAMGATIDVEGGYIKAKAPEGGLRGANFFFDTVSVTGTENIMMAAALANGRSVLQNAAREPEVVDLANFLIAMGANITGAGTDTITVDGVKRLHPATYKVMPDRIETGTYLVAAAVTGGRVKVKDTDPTILEAVLEKLREAGAEITTGEDWIELNMHGKRPKAVNVRTAPYPAFPTDMQAQFISLNAIAEGTGAVIETIFENRFMHVYELHRMGAKIQVEGNTAIVTGTEKLKGAPVMATDLRASASLVISALIAEGDTLIDRIYHIDRGYECIEEKLQMLGAKIRRVPG</sequence>
<evidence type="ECO:0000255" key="1">
    <source>
        <dbReference type="HAMAP-Rule" id="MF_00111"/>
    </source>
</evidence>
<name>MURA_PSEFS</name>